<name>FUCI_ECOK1</name>
<keyword id="KW-0119">Carbohydrate metabolism</keyword>
<keyword id="KW-0963">Cytoplasm</keyword>
<keyword id="KW-0294">Fucose metabolism</keyword>
<keyword id="KW-0413">Isomerase</keyword>
<keyword id="KW-0464">Manganese</keyword>
<keyword id="KW-0479">Metal-binding</keyword>
<keyword id="KW-1185">Reference proteome</keyword>
<sequence length="591" mass="64990">MKKISLPKIGIRPVIDGRRMGVRESLEEQTMNMAKATAALLTEKLRHACGAAVECVISDTCIAGMAEAAACEEKFSSQNVGLTITVTPCWCYGSETIDMDPTRPKAIWGFNGTERPGAVYLAAALAAHSQKGIPAFSIYGHDVQDADDTSIPADVEEKLLRFARAGLAVASMKGKSYLSLGGVSMGIAGSIVDHNFFESWLGMKVQAVDMTELRRRIDQKIYDEAELEMALAWADKNFRYGEDENNKQYQRNAEQSRAVLRESLLMAMCIRDMMQGNSKLADIGRVEESLGYNAIAAGFQGQRHWTDQYPNGDTAEAILNSSFDWNGVRKPFVVATENDSLNGVAMLMGHQLTGTAQVFADVRTYWSPEAIERVTGHKLDGLAEHGIIHLINSGSAALDGSCKQRDSEGKPTMKPHWEISQQEADACLAATEWCPAIHEYFRGGGYSSRFLTEGGVPFTMTRVNIIKGLGPVLQIAEGWSVELPKDVHDILNKRTNSTWPTTWFAPRLTGKGPFTDVYSVMANWGANHGVLTIGHVGADFITLASMLRIPVCMHNVEETKVYRPSAWAAHGMDIEGQDYRACQNYGPLYKR</sequence>
<organism>
    <name type="scientific">Escherichia coli O1:K1 / APEC</name>
    <dbReference type="NCBI Taxonomy" id="405955"/>
    <lineage>
        <taxon>Bacteria</taxon>
        <taxon>Pseudomonadati</taxon>
        <taxon>Pseudomonadota</taxon>
        <taxon>Gammaproteobacteria</taxon>
        <taxon>Enterobacterales</taxon>
        <taxon>Enterobacteriaceae</taxon>
        <taxon>Escherichia</taxon>
    </lineage>
</organism>
<comment type="function">
    <text evidence="1">Converts the aldose L-fucose into the corresponding ketose L-fuculose.</text>
</comment>
<comment type="catalytic activity">
    <reaction evidence="1">
        <text>L-fucose = L-fuculose</text>
        <dbReference type="Rhea" id="RHEA:17233"/>
        <dbReference type="ChEBI" id="CHEBI:2181"/>
        <dbReference type="ChEBI" id="CHEBI:17617"/>
        <dbReference type="EC" id="5.3.1.25"/>
    </reaction>
</comment>
<comment type="cofactor">
    <cofactor evidence="1">
        <name>Mn(2+)</name>
        <dbReference type="ChEBI" id="CHEBI:29035"/>
    </cofactor>
</comment>
<comment type="pathway">
    <text evidence="1">Carbohydrate degradation; L-fucose degradation; L-lactaldehyde and glycerone phosphate from L-fucose: step 1/3.</text>
</comment>
<comment type="subunit">
    <text evidence="1">Homohexamer.</text>
</comment>
<comment type="subcellular location">
    <subcellularLocation>
        <location evidence="1">Cytoplasm</location>
    </subcellularLocation>
</comment>
<comment type="similarity">
    <text evidence="1">Belongs to the L-fucose isomerase family.</text>
</comment>
<protein>
    <recommendedName>
        <fullName evidence="1">L-fucose isomerase</fullName>
        <ecNumber evidence="1">5.3.1.25</ecNumber>
    </recommendedName>
    <alternativeName>
        <fullName evidence="1">6-deoxy-L-galactose isomerase</fullName>
    </alternativeName>
    <alternativeName>
        <fullName>FucIase</fullName>
    </alternativeName>
</protein>
<accession>A1AEY9</accession>
<feature type="chain" id="PRO_1000067218" description="L-fucose isomerase">
    <location>
        <begin position="1"/>
        <end position="591"/>
    </location>
</feature>
<feature type="active site" description="Proton acceptor" evidence="1">
    <location>
        <position position="337"/>
    </location>
</feature>
<feature type="active site" description="Proton acceptor" evidence="1">
    <location>
        <position position="361"/>
    </location>
</feature>
<feature type="binding site" evidence="1">
    <location>
        <position position="337"/>
    </location>
    <ligand>
        <name>Mn(2+)</name>
        <dbReference type="ChEBI" id="CHEBI:29035"/>
    </ligand>
</feature>
<feature type="binding site" evidence="1">
    <location>
        <position position="361"/>
    </location>
    <ligand>
        <name>Mn(2+)</name>
        <dbReference type="ChEBI" id="CHEBI:29035"/>
    </ligand>
</feature>
<feature type="binding site" evidence="1">
    <location>
        <position position="528"/>
    </location>
    <ligand>
        <name>Mn(2+)</name>
        <dbReference type="ChEBI" id="CHEBI:29035"/>
    </ligand>
</feature>
<evidence type="ECO:0000255" key="1">
    <source>
        <dbReference type="HAMAP-Rule" id="MF_01254"/>
    </source>
</evidence>
<dbReference type="EC" id="5.3.1.25" evidence="1"/>
<dbReference type="EMBL" id="CP000468">
    <property type="protein sequence ID" value="ABJ02229.1"/>
    <property type="molecule type" value="Genomic_DNA"/>
</dbReference>
<dbReference type="RefSeq" id="WP_000724161.1">
    <property type="nucleotide sequence ID" value="NZ_CADILS010000024.1"/>
</dbReference>
<dbReference type="SMR" id="A1AEY9"/>
<dbReference type="KEGG" id="ecv:APECO1_3729"/>
<dbReference type="HOGENOM" id="CLU_033326_1_0_6"/>
<dbReference type="UniPathway" id="UPA00563">
    <property type="reaction ID" value="UER00624"/>
</dbReference>
<dbReference type="Proteomes" id="UP000008216">
    <property type="component" value="Chromosome"/>
</dbReference>
<dbReference type="GO" id="GO:0005737">
    <property type="term" value="C:cytoplasm"/>
    <property type="evidence" value="ECO:0007669"/>
    <property type="project" value="UniProtKB-SubCell"/>
</dbReference>
<dbReference type="GO" id="GO:0008790">
    <property type="term" value="F:arabinose isomerase activity"/>
    <property type="evidence" value="ECO:0007669"/>
    <property type="project" value="TreeGrafter"/>
</dbReference>
<dbReference type="GO" id="GO:0008736">
    <property type="term" value="F:L-fucose isomerase activity"/>
    <property type="evidence" value="ECO:0007669"/>
    <property type="project" value="UniProtKB-UniRule"/>
</dbReference>
<dbReference type="GO" id="GO:0030145">
    <property type="term" value="F:manganese ion binding"/>
    <property type="evidence" value="ECO:0007669"/>
    <property type="project" value="UniProtKB-UniRule"/>
</dbReference>
<dbReference type="GO" id="GO:0019571">
    <property type="term" value="P:D-arabinose catabolic process"/>
    <property type="evidence" value="ECO:0007669"/>
    <property type="project" value="TreeGrafter"/>
</dbReference>
<dbReference type="GO" id="GO:0042355">
    <property type="term" value="P:L-fucose catabolic process"/>
    <property type="evidence" value="ECO:0007669"/>
    <property type="project" value="UniProtKB-UniRule"/>
</dbReference>
<dbReference type="CDD" id="cd03556">
    <property type="entry name" value="L-fucose_isomerase"/>
    <property type="match status" value="1"/>
</dbReference>
<dbReference type="FunFam" id="3.20.14.10:FF:000001">
    <property type="entry name" value="L-fucose isomerase"/>
    <property type="match status" value="1"/>
</dbReference>
<dbReference type="FunFam" id="3.40.275.10:FF:000001">
    <property type="entry name" value="L-fucose isomerase"/>
    <property type="match status" value="1"/>
</dbReference>
<dbReference type="FunFam" id="3.40.50.1070:FF:000001">
    <property type="entry name" value="L-fucose isomerase"/>
    <property type="match status" value="1"/>
</dbReference>
<dbReference type="Gene3D" id="3.40.50.1070">
    <property type="match status" value="1"/>
</dbReference>
<dbReference type="Gene3D" id="3.40.275.10">
    <property type="entry name" value="L-fucose Isomerase, Chain A, domain 2"/>
    <property type="match status" value="1"/>
</dbReference>
<dbReference type="Gene3D" id="3.20.14.10">
    <property type="entry name" value="L-fucose/L-arabinose isomerase, C-terminal"/>
    <property type="match status" value="1"/>
</dbReference>
<dbReference type="HAMAP" id="MF_01254">
    <property type="entry name" value="Fucose_iso"/>
    <property type="match status" value="1"/>
</dbReference>
<dbReference type="InterPro" id="IPR004216">
    <property type="entry name" value="Fuc/Ara_isomerase_C"/>
</dbReference>
<dbReference type="InterPro" id="IPR038393">
    <property type="entry name" value="Fuc_iso_dom3_sf"/>
</dbReference>
<dbReference type="InterPro" id="IPR015888">
    <property type="entry name" value="Fuc_isomerase_C"/>
</dbReference>
<dbReference type="InterPro" id="IPR038391">
    <property type="entry name" value="Fucose_iso_dom1_sf"/>
</dbReference>
<dbReference type="InterPro" id="IPR012888">
    <property type="entry name" value="Fucose_iso_N1"/>
</dbReference>
<dbReference type="InterPro" id="IPR005763">
    <property type="entry name" value="Fucose_isomerase"/>
</dbReference>
<dbReference type="InterPro" id="IPR038392">
    <property type="entry name" value="Fucose_isomerase_dom2_sf"/>
</dbReference>
<dbReference type="InterPro" id="IPR009015">
    <property type="entry name" value="Fucose_isomerase_N/cen_sf"/>
</dbReference>
<dbReference type="InterPro" id="IPR012889">
    <property type="entry name" value="Fucose_isomerase_N2"/>
</dbReference>
<dbReference type="NCBIfam" id="TIGR01089">
    <property type="entry name" value="fucI"/>
    <property type="match status" value="1"/>
</dbReference>
<dbReference type="NCBIfam" id="NF008220">
    <property type="entry name" value="PRK10991.1"/>
    <property type="match status" value="1"/>
</dbReference>
<dbReference type="PANTHER" id="PTHR37840">
    <property type="entry name" value="L-FUCOSE ISOMERASE"/>
    <property type="match status" value="1"/>
</dbReference>
<dbReference type="PANTHER" id="PTHR37840:SF1">
    <property type="entry name" value="L-FUCOSE ISOMERASE"/>
    <property type="match status" value="1"/>
</dbReference>
<dbReference type="Pfam" id="PF02952">
    <property type="entry name" value="Fucose_iso_C"/>
    <property type="match status" value="1"/>
</dbReference>
<dbReference type="Pfam" id="PF07881">
    <property type="entry name" value="Fucose_iso_N1"/>
    <property type="match status" value="1"/>
</dbReference>
<dbReference type="Pfam" id="PF07882">
    <property type="entry name" value="Fucose_iso_N2"/>
    <property type="match status" value="1"/>
</dbReference>
<dbReference type="SUPFAM" id="SSF50443">
    <property type="entry name" value="FucI/AraA C-terminal domain-like"/>
    <property type="match status" value="1"/>
</dbReference>
<dbReference type="SUPFAM" id="SSF53743">
    <property type="entry name" value="FucI/AraA N-terminal and middle domains"/>
    <property type="match status" value="1"/>
</dbReference>
<gene>
    <name evidence="1" type="primary">fucI</name>
    <name type="ordered locus">Ecok1_27350</name>
    <name type="ORF">APECO1_3729</name>
</gene>
<reference key="1">
    <citation type="journal article" date="2007" name="J. Bacteriol.">
        <title>The genome sequence of avian pathogenic Escherichia coli strain O1:K1:H7 shares strong similarities with human extraintestinal pathogenic E. coli genomes.</title>
        <authorList>
            <person name="Johnson T.J."/>
            <person name="Kariyawasam S."/>
            <person name="Wannemuehler Y."/>
            <person name="Mangiamele P."/>
            <person name="Johnson S.J."/>
            <person name="Doetkott C."/>
            <person name="Skyberg J.A."/>
            <person name="Lynne A.M."/>
            <person name="Johnson J.R."/>
            <person name="Nolan L.K."/>
        </authorList>
    </citation>
    <scope>NUCLEOTIDE SEQUENCE [LARGE SCALE GENOMIC DNA]</scope>
</reference>
<proteinExistence type="inferred from homology"/>